<keyword id="KW-0997">Cell inner membrane</keyword>
<keyword id="KW-1003">Cell membrane</keyword>
<keyword id="KW-0133">Cell shape</keyword>
<keyword id="KW-0961">Cell wall biogenesis/degradation</keyword>
<keyword id="KW-0328">Glycosyltransferase</keyword>
<keyword id="KW-0472">Membrane</keyword>
<keyword id="KW-0573">Peptidoglycan synthesis</keyword>
<keyword id="KW-0808">Transferase</keyword>
<keyword id="KW-0812">Transmembrane</keyword>
<keyword id="KW-1133">Transmembrane helix</keyword>
<comment type="function">
    <text evidence="1">Peptidoglycan polymerase that catalyzes glycan chain elongation from lipid-linked precursors.</text>
</comment>
<comment type="catalytic activity">
    <reaction evidence="1">
        <text>[GlcNAc-(1-&gt;4)-Mur2Ac(oyl-L-Ala-gamma-D-Glu-L-Lys-D-Ala-D-Ala)](n)-di-trans,octa-cis-undecaprenyl diphosphate + beta-D-GlcNAc-(1-&gt;4)-Mur2Ac(oyl-L-Ala-gamma-D-Glu-L-Lys-D-Ala-D-Ala)-di-trans,octa-cis-undecaprenyl diphosphate = [GlcNAc-(1-&gt;4)-Mur2Ac(oyl-L-Ala-gamma-D-Glu-L-Lys-D-Ala-D-Ala)](n+1)-di-trans,octa-cis-undecaprenyl diphosphate + di-trans,octa-cis-undecaprenyl diphosphate + H(+)</text>
        <dbReference type="Rhea" id="RHEA:23708"/>
        <dbReference type="Rhea" id="RHEA-COMP:9602"/>
        <dbReference type="Rhea" id="RHEA-COMP:9603"/>
        <dbReference type="ChEBI" id="CHEBI:15378"/>
        <dbReference type="ChEBI" id="CHEBI:58405"/>
        <dbReference type="ChEBI" id="CHEBI:60033"/>
        <dbReference type="ChEBI" id="CHEBI:78435"/>
        <dbReference type="EC" id="2.4.99.28"/>
    </reaction>
</comment>
<comment type="pathway">
    <text evidence="1">Cell wall biogenesis; peptidoglycan biosynthesis.</text>
</comment>
<comment type="subcellular location">
    <subcellularLocation>
        <location evidence="1">Cell inner membrane</location>
        <topology evidence="1">Single-pass membrane protein</topology>
    </subcellularLocation>
</comment>
<comment type="similarity">
    <text evidence="1">Belongs to the glycosyltransferase 51 family.</text>
</comment>
<proteinExistence type="inferred from homology"/>
<organism>
    <name type="scientific">Haemophilus influenzae (strain PittEE)</name>
    <dbReference type="NCBI Taxonomy" id="374930"/>
    <lineage>
        <taxon>Bacteria</taxon>
        <taxon>Pseudomonadati</taxon>
        <taxon>Pseudomonadota</taxon>
        <taxon>Gammaproteobacteria</taxon>
        <taxon>Pasteurellales</taxon>
        <taxon>Pasteurellaceae</taxon>
        <taxon>Haemophilus</taxon>
    </lineage>
</organism>
<sequence>MKKTKRIFTALSHLFSPKWWKKNWQRVVLLFFFAVFALLLIFRFVPIPFSAYMVQQKIANLLQGDFRYQIQYDWVSLENISPNIQLAVISSEDQRFPEHLGFDFEAIQRAIRYNEKSNKGIRGASTISQQTAKNLMLWHGQNWLRKGLEVPATMLLELTWSKKRILEVYLNIAEFGNGIFGVEAASRYYFKKSAKNLSQNEAALLVAVLPNPIIYKVNKPSLLVRKKTSLDFETNGKFRY</sequence>
<accession>A5UDP3</accession>
<dbReference type="EC" id="2.4.99.28" evidence="1"/>
<dbReference type="EMBL" id="CP000671">
    <property type="protein sequence ID" value="ABQ98894.1"/>
    <property type="molecule type" value="Genomic_DNA"/>
</dbReference>
<dbReference type="SMR" id="A5UDP3"/>
<dbReference type="CAZy" id="GT51">
    <property type="family name" value="Glycosyltransferase Family 51"/>
</dbReference>
<dbReference type="KEGG" id="hip:CGSHiEE_07905"/>
<dbReference type="HOGENOM" id="CLU_006354_1_1_6"/>
<dbReference type="UniPathway" id="UPA00219"/>
<dbReference type="GO" id="GO:0009274">
    <property type="term" value="C:peptidoglycan-based cell wall"/>
    <property type="evidence" value="ECO:0007669"/>
    <property type="project" value="InterPro"/>
</dbReference>
<dbReference type="GO" id="GO:0005886">
    <property type="term" value="C:plasma membrane"/>
    <property type="evidence" value="ECO:0007669"/>
    <property type="project" value="UniProtKB-SubCell"/>
</dbReference>
<dbReference type="GO" id="GO:0016763">
    <property type="term" value="F:pentosyltransferase activity"/>
    <property type="evidence" value="ECO:0007669"/>
    <property type="project" value="InterPro"/>
</dbReference>
<dbReference type="GO" id="GO:0008955">
    <property type="term" value="F:peptidoglycan glycosyltransferase activity"/>
    <property type="evidence" value="ECO:0007669"/>
    <property type="project" value="UniProtKB-UniRule"/>
</dbReference>
<dbReference type="GO" id="GO:0071555">
    <property type="term" value="P:cell wall organization"/>
    <property type="evidence" value="ECO:0007669"/>
    <property type="project" value="UniProtKB-KW"/>
</dbReference>
<dbReference type="GO" id="GO:0009252">
    <property type="term" value="P:peptidoglycan biosynthetic process"/>
    <property type="evidence" value="ECO:0007669"/>
    <property type="project" value="UniProtKB-UniRule"/>
</dbReference>
<dbReference type="GO" id="GO:0008360">
    <property type="term" value="P:regulation of cell shape"/>
    <property type="evidence" value="ECO:0007669"/>
    <property type="project" value="UniProtKB-KW"/>
</dbReference>
<dbReference type="Gene3D" id="1.10.3810.10">
    <property type="entry name" value="Biosynthetic peptidoglycan transglycosylase-like"/>
    <property type="match status" value="1"/>
</dbReference>
<dbReference type="HAMAP" id="MF_00766">
    <property type="entry name" value="PGT_MtgA"/>
    <property type="match status" value="1"/>
</dbReference>
<dbReference type="InterPro" id="IPR001264">
    <property type="entry name" value="Glyco_trans_51"/>
</dbReference>
<dbReference type="InterPro" id="IPR023346">
    <property type="entry name" value="Lysozyme-like_dom_sf"/>
</dbReference>
<dbReference type="InterPro" id="IPR036950">
    <property type="entry name" value="PBP_transglycosylase"/>
</dbReference>
<dbReference type="InterPro" id="IPR011812">
    <property type="entry name" value="Pep_trsgly"/>
</dbReference>
<dbReference type="NCBIfam" id="TIGR02070">
    <property type="entry name" value="mono_pep_trsgly"/>
    <property type="match status" value="1"/>
</dbReference>
<dbReference type="PANTHER" id="PTHR30400:SF0">
    <property type="entry name" value="BIOSYNTHETIC PEPTIDOGLYCAN TRANSGLYCOSYLASE"/>
    <property type="match status" value="1"/>
</dbReference>
<dbReference type="PANTHER" id="PTHR30400">
    <property type="entry name" value="MONOFUNCTIONAL BIOSYNTHETIC PEPTIDOGLYCAN TRANSGLYCOSYLASE"/>
    <property type="match status" value="1"/>
</dbReference>
<dbReference type="Pfam" id="PF00912">
    <property type="entry name" value="Transgly"/>
    <property type="match status" value="1"/>
</dbReference>
<dbReference type="SUPFAM" id="SSF53955">
    <property type="entry name" value="Lysozyme-like"/>
    <property type="match status" value="1"/>
</dbReference>
<reference key="1">
    <citation type="journal article" date="2007" name="Genome Biol.">
        <title>Characterization and modeling of the Haemophilus influenzae core and supragenomes based on the complete genomic sequences of Rd and 12 clinical nontypeable strains.</title>
        <authorList>
            <person name="Hogg J.S."/>
            <person name="Hu F.Z."/>
            <person name="Janto B."/>
            <person name="Boissy R."/>
            <person name="Hayes J."/>
            <person name="Keefe R."/>
            <person name="Post J.C."/>
            <person name="Ehrlich G.D."/>
        </authorList>
    </citation>
    <scope>NUCLEOTIDE SEQUENCE [LARGE SCALE GENOMIC DNA]</scope>
    <source>
        <strain>PittEE</strain>
    </source>
</reference>
<protein>
    <recommendedName>
        <fullName evidence="1">Biosynthetic peptidoglycan transglycosylase</fullName>
        <ecNumber evidence="1">2.4.99.28</ecNumber>
    </recommendedName>
    <alternativeName>
        <fullName evidence="1">Glycan polymerase</fullName>
    </alternativeName>
    <alternativeName>
        <fullName evidence="1">Peptidoglycan glycosyltransferase MtgA</fullName>
        <shortName evidence="1">PGT</shortName>
    </alternativeName>
</protein>
<evidence type="ECO:0000255" key="1">
    <source>
        <dbReference type="HAMAP-Rule" id="MF_00766"/>
    </source>
</evidence>
<feature type="chain" id="PRO_1000017306" description="Biosynthetic peptidoglycan transglycosylase">
    <location>
        <begin position="1"/>
        <end position="240"/>
    </location>
</feature>
<feature type="transmembrane region" description="Helical" evidence="1">
    <location>
        <begin position="27"/>
        <end position="47"/>
    </location>
</feature>
<name>MTGA_HAEIE</name>
<gene>
    <name evidence="1" type="primary">mtgA</name>
    <name type="ordered locus">CGSHiEE_07905</name>
</gene>